<evidence type="ECO:0000255" key="1">
    <source>
        <dbReference type="HAMAP-Rule" id="MF_00112"/>
    </source>
</evidence>
<evidence type="ECO:0000269" key="2">
    <source>
    </source>
</evidence>
<evidence type="ECO:0000269" key="3">
    <source>
    </source>
</evidence>
<evidence type="ECO:0007744" key="4">
    <source>
        <dbReference type="PDB" id="4NAE"/>
    </source>
</evidence>
<evidence type="ECO:0007744" key="5">
    <source>
        <dbReference type="PDB" id="4NAF"/>
    </source>
</evidence>
<evidence type="ECO:0007829" key="6">
    <source>
        <dbReference type="PDB" id="4NAF"/>
    </source>
</evidence>
<name>PCRB_GEOKA</name>
<organism>
    <name type="scientific">Geobacillus kaustophilus (strain HTA426)</name>
    <dbReference type="NCBI Taxonomy" id="235909"/>
    <lineage>
        <taxon>Bacteria</taxon>
        <taxon>Bacillati</taxon>
        <taxon>Bacillota</taxon>
        <taxon>Bacilli</taxon>
        <taxon>Bacillales</taxon>
        <taxon>Anoxybacillaceae</taxon>
        <taxon>Geobacillus</taxon>
        <taxon>Geobacillus thermoleovorans group</taxon>
    </lineage>
</organism>
<keyword id="KW-0002">3D-structure</keyword>
<keyword id="KW-0444">Lipid biosynthesis</keyword>
<keyword id="KW-0443">Lipid metabolism</keyword>
<keyword id="KW-0460">Magnesium</keyword>
<keyword id="KW-0479">Metal-binding</keyword>
<keyword id="KW-0594">Phospholipid biosynthesis</keyword>
<keyword id="KW-1208">Phospholipid metabolism</keyword>
<keyword id="KW-1185">Reference proteome</keyword>
<keyword id="KW-0808">Transferase</keyword>
<feature type="chain" id="PRO_0000138712" description="Heptaprenylglyceryl phosphate synthase">
    <location>
        <begin position="1"/>
        <end position="239"/>
    </location>
</feature>
<feature type="binding site" evidence="1 3 4">
    <location>
        <position position="12"/>
    </location>
    <ligand>
        <name>sn-glycerol 1-phosphate</name>
        <dbReference type="ChEBI" id="CHEBI:57685"/>
    </ligand>
</feature>
<feature type="binding site" evidence="1">
    <location>
        <position position="14"/>
    </location>
    <ligand>
        <name>Mg(2+)</name>
        <dbReference type="ChEBI" id="CHEBI:18420"/>
    </ligand>
</feature>
<feature type="binding site" evidence="1">
    <location>
        <position position="40"/>
    </location>
    <ligand>
        <name>Mg(2+)</name>
        <dbReference type="ChEBI" id="CHEBI:18420"/>
    </ligand>
</feature>
<feature type="binding site" evidence="1 3 4">
    <location>
        <begin position="159"/>
        <end position="164"/>
    </location>
    <ligand>
        <name>sn-glycerol 1-phosphate</name>
        <dbReference type="ChEBI" id="CHEBI:57685"/>
    </ligand>
</feature>
<feature type="binding site" evidence="1 3 4">
    <location>
        <position position="189"/>
    </location>
    <ligand>
        <name>sn-glycerol 1-phosphate</name>
        <dbReference type="ChEBI" id="CHEBI:57685"/>
    </ligand>
</feature>
<feature type="binding site" evidence="1 3 4">
    <location>
        <begin position="209"/>
        <end position="210"/>
    </location>
    <ligand>
        <name>sn-glycerol 1-phosphate</name>
        <dbReference type="ChEBI" id="CHEBI:57685"/>
    </ligand>
</feature>
<feature type="helix" evidence="6">
    <location>
        <begin position="4"/>
        <end position="6"/>
    </location>
</feature>
<feature type="strand" evidence="6">
    <location>
        <begin position="8"/>
        <end position="13"/>
    </location>
</feature>
<feature type="helix" evidence="6">
    <location>
        <begin position="21"/>
        <end position="28"/>
    </location>
</feature>
<feature type="turn" evidence="6">
    <location>
        <begin position="29"/>
        <end position="31"/>
    </location>
</feature>
<feature type="strand" evidence="6">
    <location>
        <begin position="33"/>
        <end position="38"/>
    </location>
</feature>
<feature type="helix" evidence="6">
    <location>
        <begin position="45"/>
        <end position="55"/>
    </location>
</feature>
<feature type="strand" evidence="6">
    <location>
        <begin position="58"/>
        <end position="60"/>
    </location>
</feature>
<feature type="strand" evidence="6">
    <location>
        <begin position="62"/>
        <end position="65"/>
    </location>
</feature>
<feature type="helix" evidence="6">
    <location>
        <begin position="69"/>
        <end position="71"/>
    </location>
</feature>
<feature type="strand" evidence="6">
    <location>
        <begin position="77"/>
        <end position="84"/>
    </location>
</feature>
<feature type="strand" evidence="6">
    <location>
        <begin position="87"/>
        <end position="89"/>
    </location>
</feature>
<feature type="turn" evidence="6">
    <location>
        <begin position="90"/>
        <end position="94"/>
    </location>
</feature>
<feature type="helix" evidence="6">
    <location>
        <begin position="95"/>
        <end position="104"/>
    </location>
</feature>
<feature type="helix" evidence="6">
    <location>
        <begin position="105"/>
        <end position="107"/>
    </location>
</feature>
<feature type="helix" evidence="6">
    <location>
        <begin position="110"/>
        <end position="112"/>
    </location>
</feature>
<feature type="strand" evidence="6">
    <location>
        <begin position="113"/>
        <end position="120"/>
    </location>
</feature>
<feature type="helix" evidence="6">
    <location>
        <begin position="126"/>
        <end position="131"/>
    </location>
</feature>
<feature type="helix" evidence="6">
    <location>
        <begin position="139"/>
        <end position="151"/>
    </location>
</feature>
<feature type="strand" evidence="6">
    <location>
        <begin position="156"/>
        <end position="161"/>
    </location>
</feature>
<feature type="helix" evidence="6">
    <location>
        <begin position="169"/>
        <end position="178"/>
    </location>
</feature>
<feature type="strand" evidence="6">
    <location>
        <begin position="180"/>
        <end position="188"/>
    </location>
</feature>
<feature type="helix" evidence="6">
    <location>
        <begin position="193"/>
        <end position="200"/>
    </location>
</feature>
<feature type="strand" evidence="6">
    <location>
        <begin position="204"/>
        <end position="208"/>
    </location>
</feature>
<feature type="helix" evidence="6">
    <location>
        <begin position="211"/>
        <end position="214"/>
    </location>
</feature>
<feature type="helix" evidence="6">
    <location>
        <begin position="216"/>
        <end position="227"/>
    </location>
</feature>
<reference key="1">
    <citation type="journal article" date="2004" name="Nucleic Acids Res.">
        <title>Thermoadaptation trait revealed by the genome sequence of thermophilic Geobacillus kaustophilus.</title>
        <authorList>
            <person name="Takami H."/>
            <person name="Takaki Y."/>
            <person name="Chee G.-J."/>
            <person name="Nishi S."/>
            <person name="Shimamura S."/>
            <person name="Suzuki H."/>
            <person name="Matsui S."/>
            <person name="Uchiyama I."/>
        </authorList>
    </citation>
    <scope>NUCLEOTIDE SEQUENCE [LARGE SCALE GENOMIC DNA]</scope>
    <source>
        <strain>HTA426</strain>
    </source>
</reference>
<reference key="2">
    <citation type="journal article" date="2011" name="Angew. Chem. Int. Ed. Engl.">
        <title>Functional assignment of an enzyme that catalyzes the synthesis of an archaea-type ether lipid in bacteria.</title>
        <authorList>
            <person name="Guldan H."/>
            <person name="Matysik F.M."/>
            <person name="Bocola M."/>
            <person name="Sterner R."/>
            <person name="Babinger P."/>
        </authorList>
    </citation>
    <scope>FUNCTION</scope>
    <scope>CATALYTIC ACTIVITY</scope>
    <scope>SUBSTRATE SPECIFICITY</scope>
    <scope>SUBUNIT</scope>
</reference>
<reference evidence="4 5" key="3">
    <citation type="journal article" date="2014" name="Mol. Microbiol.">
        <title>A comprehensive analysis of the geranylgeranylglyceryl phosphate synthase enzyme family identifies novel members and reveals mechanisms of substrate specificity and quaternary structure organization.</title>
        <authorList>
            <person name="Peterhoff D."/>
            <person name="Beer B."/>
            <person name="Rajendran C."/>
            <person name="Kumpula E.P."/>
            <person name="Kapetaniou E."/>
            <person name="Guldan H."/>
            <person name="Wierenga R.K."/>
            <person name="Sterner R."/>
            <person name="Babinger P."/>
        </authorList>
    </citation>
    <scope>X-RAY CRYSTALLOGRAPHY (1.90 ANGSTROMS) OF 2-228 IN COMPLEX WITH GLYCEROL 1-PHOSPHATE</scope>
    <scope>FUNCTION</scope>
    <scope>CATALYTIC ACTIVITY</scope>
    <scope>SUBUNIT</scope>
</reference>
<sequence length="239" mass="26611">MEEIRAWRHVFKLDPNKPIDDERLERLCESGTDAVIVGGTDGVTIDNVLDLLARIRRFSVPCALEVTDVEALTPGFDVYLVPIVLNSRQAEWIIGRHHEAVKQYGDMMNWDEIAAEGYCILNPECKAAKLTRADTELDVDDIVAYARLAEHLYKLPIFYLEYSGVYGDPSVVEKVKQALDQTQLFYGGGITTPEQAEHMARYADTVVVGNAIYDAFEQALATVAAVKQMAGQRNGDDGK</sequence>
<gene>
    <name evidence="1" type="primary">pcrB</name>
    <name type="ordered locus">GK0274</name>
</gene>
<comment type="function">
    <text evidence="2 3">Prenyltransferase that catalyzes in vivo the transfer of the heptaprenyl moiety of heptaprenyl pyrophosphate (HepPP; 35 carbon atoms) to the C3 hydroxyl of sn-glycerol-1-phosphate (G1P), producing heptaprenylglyceryl phosphate (HepGP). This reaction is an ether-bond-formation step in the biosynthesis of archaea-type G1P-based membrane lipids found in Bacillales. To a much lesser extent, is also able to use geranylgeranyl diphosphate (GGPP; C20) as the prenyl donor.</text>
</comment>
<comment type="catalytic activity">
    <reaction evidence="1 2 3">
        <text>sn-glycerol 1-phosphate + all-trans-heptaprenyl diphosphate = 3-heptaprenyl-sn-glycero-1-phosphate + diphosphate</text>
        <dbReference type="Rhea" id="RHEA:33495"/>
        <dbReference type="ChEBI" id="CHEBI:33019"/>
        <dbReference type="ChEBI" id="CHEBI:57685"/>
        <dbReference type="ChEBI" id="CHEBI:58206"/>
        <dbReference type="ChEBI" id="CHEBI:64781"/>
        <dbReference type="EC" id="2.5.1.n9"/>
    </reaction>
</comment>
<comment type="cofactor">
    <cofactor evidence="1">
        <name>Mg(2+)</name>
        <dbReference type="ChEBI" id="CHEBI:18420"/>
    </cofactor>
</comment>
<comment type="pathway">
    <text evidence="1">Membrane lipid metabolism; glycerophospholipid metabolism.</text>
</comment>
<comment type="subunit">
    <text evidence="1 2 3">Homodimer.</text>
</comment>
<comment type="similarity">
    <text evidence="1">Belongs to the GGGP/HepGP synthase family. Group I subfamily.</text>
</comment>
<accession>Q5L3C1</accession>
<dbReference type="EC" id="2.5.1.n9" evidence="1 2 3"/>
<dbReference type="EMBL" id="BA000043">
    <property type="protein sequence ID" value="BAD74559.1"/>
    <property type="molecule type" value="Genomic_DNA"/>
</dbReference>
<dbReference type="RefSeq" id="WP_011229783.1">
    <property type="nucleotide sequence ID" value="NC_006510.1"/>
</dbReference>
<dbReference type="PDB" id="4NAE">
    <property type="method" value="X-ray"/>
    <property type="resolution" value="2.00 A"/>
    <property type="chains" value="A=3-227, B=1-227"/>
</dbReference>
<dbReference type="PDB" id="4NAF">
    <property type="method" value="X-ray"/>
    <property type="resolution" value="1.90 A"/>
    <property type="chains" value="A=3-228, B=2-228"/>
</dbReference>
<dbReference type="PDBsum" id="4NAE"/>
<dbReference type="PDBsum" id="4NAF"/>
<dbReference type="SMR" id="Q5L3C1"/>
<dbReference type="STRING" id="235909.GK0274"/>
<dbReference type="KEGG" id="gka:GK0274"/>
<dbReference type="eggNOG" id="COG1646">
    <property type="taxonomic scope" value="Bacteria"/>
</dbReference>
<dbReference type="HOGENOM" id="CLU_095211_0_0_9"/>
<dbReference type="UniPathway" id="UPA00940"/>
<dbReference type="EvolutionaryTrace" id="Q5L3C1"/>
<dbReference type="Proteomes" id="UP000001172">
    <property type="component" value="Chromosome"/>
</dbReference>
<dbReference type="GO" id="GO:0120536">
    <property type="term" value="F:heptaprenylglyceryl phosphate synthase activity"/>
    <property type="evidence" value="ECO:0000316"/>
    <property type="project" value="UniProtKB"/>
</dbReference>
<dbReference type="GO" id="GO:0000287">
    <property type="term" value="F:magnesium ion binding"/>
    <property type="evidence" value="ECO:0007669"/>
    <property type="project" value="UniProtKB-UniRule"/>
</dbReference>
<dbReference type="GO" id="GO:0004659">
    <property type="term" value="F:prenyltransferase activity"/>
    <property type="evidence" value="ECO:0000314"/>
    <property type="project" value="UniProtKB"/>
</dbReference>
<dbReference type="GO" id="GO:0046474">
    <property type="term" value="P:glycerophospholipid biosynthetic process"/>
    <property type="evidence" value="ECO:0000316"/>
    <property type="project" value="UniProtKB"/>
</dbReference>
<dbReference type="CDD" id="cd02812">
    <property type="entry name" value="PcrB_like"/>
    <property type="match status" value="1"/>
</dbReference>
<dbReference type="FunFam" id="3.20.20.390:FF:000001">
    <property type="entry name" value="Heptaprenylglyceryl phosphate synthase"/>
    <property type="match status" value="1"/>
</dbReference>
<dbReference type="Gene3D" id="3.20.20.390">
    <property type="entry name" value="FMN-linked oxidoreductases"/>
    <property type="match status" value="1"/>
</dbReference>
<dbReference type="HAMAP" id="MF_00112">
    <property type="entry name" value="GGGP_HepGP_synthase"/>
    <property type="match status" value="1"/>
</dbReference>
<dbReference type="InterPro" id="IPR039074">
    <property type="entry name" value="GGGP/HepGP_synthase_I"/>
</dbReference>
<dbReference type="InterPro" id="IPR038597">
    <property type="entry name" value="GGGP/HepGP_synthase_sf"/>
</dbReference>
<dbReference type="InterPro" id="IPR008205">
    <property type="entry name" value="GGGP_HepGP_synthase"/>
</dbReference>
<dbReference type="NCBIfam" id="TIGR01768">
    <property type="entry name" value="GGGP-family"/>
    <property type="match status" value="1"/>
</dbReference>
<dbReference type="NCBIfam" id="NF003197">
    <property type="entry name" value="PRK04169.1-1"/>
    <property type="match status" value="1"/>
</dbReference>
<dbReference type="NCBIfam" id="NF003199">
    <property type="entry name" value="PRK04169.1-3"/>
    <property type="match status" value="1"/>
</dbReference>
<dbReference type="PANTHER" id="PTHR40029">
    <property type="match status" value="1"/>
</dbReference>
<dbReference type="PANTHER" id="PTHR40029:SF2">
    <property type="entry name" value="HEPTAPRENYLGLYCERYL PHOSPHATE SYNTHASE"/>
    <property type="match status" value="1"/>
</dbReference>
<dbReference type="Pfam" id="PF01884">
    <property type="entry name" value="PcrB"/>
    <property type="match status" value="1"/>
</dbReference>
<dbReference type="SUPFAM" id="SSF51395">
    <property type="entry name" value="FMN-linked oxidoreductases"/>
    <property type="match status" value="1"/>
</dbReference>
<protein>
    <recommendedName>
        <fullName evidence="1">Heptaprenylglyceryl phosphate synthase</fullName>
        <shortName evidence="1">HepGP synthase</shortName>
        <ecNumber evidence="1 2 3">2.5.1.n9</ecNumber>
    </recommendedName>
    <alternativeName>
        <fullName evidence="1">Glycerol-1-phosphate heptaprenyltransferase</fullName>
    </alternativeName>
</protein>
<proteinExistence type="evidence at protein level"/>